<organism>
    <name type="scientific">Trichormus variabilis (strain ATCC 29413 / PCC 7937)</name>
    <name type="common">Anabaena variabilis</name>
    <dbReference type="NCBI Taxonomy" id="240292"/>
    <lineage>
        <taxon>Bacteria</taxon>
        <taxon>Bacillati</taxon>
        <taxon>Cyanobacteriota</taxon>
        <taxon>Cyanophyceae</taxon>
        <taxon>Nostocales</taxon>
        <taxon>Nostocaceae</taxon>
        <taxon>Trichormus</taxon>
    </lineage>
</organism>
<gene>
    <name type="primary">fdxN</name>
    <name type="ordered locus">Ava_3913</name>
</gene>
<protein>
    <recommendedName>
        <fullName>Ferredoxin-like protein in nif region</fullName>
    </recommendedName>
</protein>
<proteinExistence type="predicted"/>
<name>FDXN_TRIV2</name>
<feature type="chain" id="PRO_0000159162" description="Ferredoxin-like protein in nif region">
    <location>
        <begin position="1"/>
        <end position="116"/>
    </location>
</feature>
<feature type="domain" description="4Fe-4S ferredoxin-type" evidence="2">
    <location>
        <begin position="2"/>
        <end position="29"/>
    </location>
</feature>
<feature type="binding site" evidence="1">
    <location>
        <position position="9"/>
    </location>
    <ligand>
        <name>iron-sulfur cluster</name>
        <dbReference type="ChEBI" id="CHEBI:30408"/>
    </ligand>
</feature>
<feature type="binding site" evidence="1">
    <location>
        <position position="12"/>
    </location>
    <ligand>
        <name>iron-sulfur cluster</name>
        <dbReference type="ChEBI" id="CHEBI:30408"/>
    </ligand>
</feature>
<feature type="binding site" evidence="1">
    <location>
        <position position="15"/>
    </location>
    <ligand>
        <name>iron-sulfur cluster</name>
        <dbReference type="ChEBI" id="CHEBI:30408"/>
    </ligand>
</feature>
<feature type="binding site" evidence="1">
    <location>
        <position position="19"/>
    </location>
    <ligand>
        <name>iron-sulfur cluster</name>
        <dbReference type="ChEBI" id="CHEBI:30408"/>
    </ligand>
</feature>
<evidence type="ECO:0000250" key="1"/>
<evidence type="ECO:0000255" key="2">
    <source>
        <dbReference type="PROSITE-ProRule" id="PRU00711"/>
    </source>
</evidence>
<sequence>MAYTITSQCISCKLCSSVCPTGAIKVAEDGQHWIDQALCTNCVDSVHTVPQCKAGCPTCDGCVKVPSDYWEGWFANYNRVIAKLTKKQDYWERWFNCYSQKFSEQIQKHQGEILGV</sequence>
<accession>P0A3D4</accession>
<accession>Q3M668</accession>
<accession>Q57383</accession>
<dbReference type="EMBL" id="X69898">
    <property type="protein sequence ID" value="CAA49522.1"/>
    <property type="molecule type" value="Genomic_DNA"/>
</dbReference>
<dbReference type="EMBL" id="CP000117">
    <property type="protein sequence ID" value="ABA23518.1"/>
    <property type="molecule type" value="Genomic_DNA"/>
</dbReference>
<dbReference type="PIR" id="S32676">
    <property type="entry name" value="S32676"/>
</dbReference>
<dbReference type="STRING" id="240292.Ava_3913"/>
<dbReference type="KEGG" id="ava:Ava_3913"/>
<dbReference type="eggNOG" id="COG1145">
    <property type="taxonomic scope" value="Bacteria"/>
</dbReference>
<dbReference type="HOGENOM" id="CLU_2140629_0_0_3"/>
<dbReference type="Proteomes" id="UP000002533">
    <property type="component" value="Chromosome"/>
</dbReference>
<dbReference type="GO" id="GO:0051539">
    <property type="term" value="F:4 iron, 4 sulfur cluster binding"/>
    <property type="evidence" value="ECO:0007669"/>
    <property type="project" value="UniProtKB-KW"/>
</dbReference>
<dbReference type="GO" id="GO:0046872">
    <property type="term" value="F:metal ion binding"/>
    <property type="evidence" value="ECO:0007669"/>
    <property type="project" value="UniProtKB-KW"/>
</dbReference>
<dbReference type="GO" id="GO:0009399">
    <property type="term" value="P:nitrogen fixation"/>
    <property type="evidence" value="ECO:0007669"/>
    <property type="project" value="UniProtKB-KW"/>
</dbReference>
<dbReference type="Gene3D" id="3.30.70.20">
    <property type="match status" value="1"/>
</dbReference>
<dbReference type="InterPro" id="IPR017896">
    <property type="entry name" value="4Fe4S_Fe-S-bd"/>
</dbReference>
<dbReference type="InterPro" id="IPR017900">
    <property type="entry name" value="4Fe4S_Fe_S_CS"/>
</dbReference>
<dbReference type="Pfam" id="PF00037">
    <property type="entry name" value="Fer4"/>
    <property type="match status" value="1"/>
</dbReference>
<dbReference type="SUPFAM" id="SSF54862">
    <property type="entry name" value="4Fe-4S ferredoxins"/>
    <property type="match status" value="1"/>
</dbReference>
<dbReference type="PROSITE" id="PS00198">
    <property type="entry name" value="4FE4S_FER_1"/>
    <property type="match status" value="1"/>
</dbReference>
<dbReference type="PROSITE" id="PS51379">
    <property type="entry name" value="4FE4S_FER_2"/>
    <property type="match status" value="1"/>
</dbReference>
<keyword id="KW-0004">4Fe-4S</keyword>
<keyword id="KW-0249">Electron transport</keyword>
<keyword id="KW-0408">Iron</keyword>
<keyword id="KW-0411">Iron-sulfur</keyword>
<keyword id="KW-0479">Metal-binding</keyword>
<keyword id="KW-0535">Nitrogen fixation</keyword>
<keyword id="KW-0813">Transport</keyword>
<reference key="1">
    <citation type="submission" date="1993-04" db="EMBL/GenBank/DDBJ databases">
        <authorList>
            <person name="Monnerjahn U."/>
            <person name="Boehme H."/>
        </authorList>
    </citation>
    <scope>NUCLEOTIDE SEQUENCE [GENOMIC DNA]</scope>
</reference>
<reference key="2">
    <citation type="journal article" date="2014" name="Stand. Genomic Sci.">
        <title>Complete genome sequence of Anabaena variabilis ATCC 29413.</title>
        <authorList>
            <person name="Thiel T."/>
            <person name="Pratte B.S."/>
            <person name="Zhong J."/>
            <person name="Goodwin L."/>
            <person name="Copeland A."/>
            <person name="Lucas S."/>
            <person name="Han C."/>
            <person name="Pitluck S."/>
            <person name="Land M.L."/>
            <person name="Kyrpides N.C."/>
            <person name="Woyke T."/>
        </authorList>
    </citation>
    <scope>NUCLEOTIDE SEQUENCE [LARGE SCALE GENOMIC DNA]</scope>
    <source>
        <strain>ATCC 29413 / PCC 7937</strain>
    </source>
</reference>